<sequence length="577" mass="65738">MTSKVGAVATKTYREKLGPEILEVFDKSYKSFTDVQVLAGTHLLNLSDVVVESPTGSGKTLAFVLPMMRMIQNARLQPNEIGALILSPSRELCSQIVNVIKPFAEKMKLNVETVTGGQKVDKNIKMFKNKDINILVATPGRLFQIIQHEKTMIARAMKGVQLLVIDEADRFNEIQFEDHMREILSCIPKQRRTGLFSATQVKEEDDLMVFGLRNAKQVKVSQERNSAAPSTLKNYFVECPADEKTSVCLEFIRQRTDKKVLIFFPSCNSVRYFHKIFERCLTKRPLFAVHGKCSNPHRAAQIKAFSESTNGVMISTDVMARGIDITDIDWVIQYDLPKHSSWFVHRAGRTARCGRDGNALILIATEQLAYVSFLDNHEKVKLEEVKVPTSTSRKAEELRQKMIKIQVSDRAILELGTRAFVSHIESYAKHDCHLICSLDDLNVVGLANSYALLRLPKMRELAQRKDLNQFDRSDIETSEIKYADPKLEANRDTVMKEKHEKKIETLAAKEKKRREKEARKMKRAGGRFKSRATGANAEEKRAKKRKSEEEDDAQNDIRLLKKIKRGKLSKKEIKDVL</sequence>
<feature type="chain" id="PRO_0000252216" description="Probable ATP-dependent RNA helicase DDX55 homolog">
    <location>
        <begin position="1"/>
        <end position="577"/>
    </location>
</feature>
<feature type="domain" description="Helicase ATP-binding" evidence="1">
    <location>
        <begin position="40"/>
        <end position="218"/>
    </location>
</feature>
<feature type="domain" description="Helicase C-terminal" evidence="2">
    <location>
        <begin position="231"/>
        <end position="393"/>
    </location>
</feature>
<feature type="region of interest" description="Disordered" evidence="3">
    <location>
        <begin position="508"/>
        <end position="577"/>
    </location>
</feature>
<feature type="short sequence motif" description="Q motif">
    <location>
        <begin position="7"/>
        <end position="37"/>
    </location>
</feature>
<feature type="short sequence motif" description="DEAD box">
    <location>
        <begin position="166"/>
        <end position="169"/>
    </location>
</feature>
<feature type="compositionally biased region" description="Basic residues" evidence="3">
    <location>
        <begin position="510"/>
        <end position="530"/>
    </location>
</feature>
<feature type="binding site" evidence="1">
    <location>
        <begin position="53"/>
        <end position="60"/>
    </location>
    <ligand>
        <name>ATP</name>
        <dbReference type="ChEBI" id="CHEBI:30616"/>
    </ligand>
</feature>
<dbReference type="EC" id="3.6.4.13"/>
<dbReference type="EMBL" id="HE601347">
    <property type="protein sequence ID" value="CAP27047.1"/>
    <property type="molecule type" value="Genomic_DNA"/>
</dbReference>
<dbReference type="RefSeq" id="XP_002642404.1">
    <property type="nucleotide sequence ID" value="XM_002642358.1"/>
</dbReference>
<dbReference type="SMR" id="Q61R02"/>
<dbReference type="FunCoup" id="Q61R02">
    <property type="interactions" value="2772"/>
</dbReference>
<dbReference type="STRING" id="6238.Q61R02"/>
<dbReference type="EnsemblMetazoa" id="CBG06798.1">
    <property type="protein sequence ID" value="CBG06798.1"/>
    <property type="gene ID" value="WBGene00029014"/>
</dbReference>
<dbReference type="GeneID" id="8584398"/>
<dbReference type="KEGG" id="cbr:CBG_06798"/>
<dbReference type="CTD" id="8584398"/>
<dbReference type="WormBase" id="CBG06798">
    <property type="protein sequence ID" value="CBP01738"/>
    <property type="gene ID" value="WBGene00029014"/>
</dbReference>
<dbReference type="eggNOG" id="KOG0345">
    <property type="taxonomic scope" value="Eukaryota"/>
</dbReference>
<dbReference type="HOGENOM" id="CLU_003041_26_4_1"/>
<dbReference type="InParanoid" id="Q61R02"/>
<dbReference type="OMA" id="IQFEDHM"/>
<dbReference type="OrthoDB" id="7396459at2759"/>
<dbReference type="Proteomes" id="UP000008549">
    <property type="component" value="Unassembled WGS sequence"/>
</dbReference>
<dbReference type="GO" id="GO:0005730">
    <property type="term" value="C:nucleolus"/>
    <property type="evidence" value="ECO:0000318"/>
    <property type="project" value="GO_Central"/>
</dbReference>
<dbReference type="GO" id="GO:0043186">
    <property type="term" value="C:P granule"/>
    <property type="evidence" value="ECO:0007669"/>
    <property type="project" value="UniProtKB-ARBA"/>
</dbReference>
<dbReference type="GO" id="GO:0005524">
    <property type="term" value="F:ATP binding"/>
    <property type="evidence" value="ECO:0007669"/>
    <property type="project" value="UniProtKB-KW"/>
</dbReference>
<dbReference type="GO" id="GO:0016887">
    <property type="term" value="F:ATP hydrolysis activity"/>
    <property type="evidence" value="ECO:0007669"/>
    <property type="project" value="RHEA"/>
</dbReference>
<dbReference type="GO" id="GO:0003723">
    <property type="term" value="F:RNA binding"/>
    <property type="evidence" value="ECO:0007669"/>
    <property type="project" value="UniProtKB-KW"/>
</dbReference>
<dbReference type="GO" id="GO:0003724">
    <property type="term" value="F:RNA helicase activity"/>
    <property type="evidence" value="ECO:0007669"/>
    <property type="project" value="UniProtKB-EC"/>
</dbReference>
<dbReference type="CDD" id="cd17960">
    <property type="entry name" value="DEADc_DDX55"/>
    <property type="match status" value="1"/>
</dbReference>
<dbReference type="CDD" id="cd18787">
    <property type="entry name" value="SF2_C_DEAD"/>
    <property type="match status" value="1"/>
</dbReference>
<dbReference type="Gene3D" id="3.40.50.300">
    <property type="entry name" value="P-loop containing nucleotide triphosphate hydrolases"/>
    <property type="match status" value="2"/>
</dbReference>
<dbReference type="InterPro" id="IPR011545">
    <property type="entry name" value="DEAD/DEAH_box_helicase_dom"/>
</dbReference>
<dbReference type="InterPro" id="IPR014001">
    <property type="entry name" value="Helicase_ATP-bd"/>
</dbReference>
<dbReference type="InterPro" id="IPR001650">
    <property type="entry name" value="Helicase_C-like"/>
</dbReference>
<dbReference type="InterPro" id="IPR027417">
    <property type="entry name" value="P-loop_NTPase"/>
</dbReference>
<dbReference type="InterPro" id="IPR000629">
    <property type="entry name" value="RNA-helicase_DEAD-box_CS"/>
</dbReference>
<dbReference type="InterPro" id="IPR025313">
    <property type="entry name" value="SPB4-like_CTE"/>
</dbReference>
<dbReference type="PANTHER" id="PTHR24031">
    <property type="entry name" value="RNA HELICASE"/>
    <property type="match status" value="1"/>
</dbReference>
<dbReference type="Pfam" id="PF13959">
    <property type="entry name" value="CTE_SPB4"/>
    <property type="match status" value="1"/>
</dbReference>
<dbReference type="Pfam" id="PF00270">
    <property type="entry name" value="DEAD"/>
    <property type="match status" value="1"/>
</dbReference>
<dbReference type="Pfam" id="PF00271">
    <property type="entry name" value="Helicase_C"/>
    <property type="match status" value="1"/>
</dbReference>
<dbReference type="SMART" id="SM00487">
    <property type="entry name" value="DEXDc"/>
    <property type="match status" value="1"/>
</dbReference>
<dbReference type="SMART" id="SM01178">
    <property type="entry name" value="DUF4217"/>
    <property type="match status" value="1"/>
</dbReference>
<dbReference type="SMART" id="SM00490">
    <property type="entry name" value="HELICc"/>
    <property type="match status" value="1"/>
</dbReference>
<dbReference type="SUPFAM" id="SSF52540">
    <property type="entry name" value="P-loop containing nucleoside triphosphate hydrolases"/>
    <property type="match status" value="1"/>
</dbReference>
<dbReference type="PROSITE" id="PS00039">
    <property type="entry name" value="DEAD_ATP_HELICASE"/>
    <property type="match status" value="1"/>
</dbReference>
<dbReference type="PROSITE" id="PS51192">
    <property type="entry name" value="HELICASE_ATP_BIND_1"/>
    <property type="match status" value="1"/>
</dbReference>
<dbReference type="PROSITE" id="PS51194">
    <property type="entry name" value="HELICASE_CTER"/>
    <property type="match status" value="1"/>
</dbReference>
<accession>Q61R02</accession>
<accession>A8X337</accession>
<comment type="function">
    <text>Probable ATP-binding RNA helicase.</text>
</comment>
<comment type="catalytic activity">
    <reaction>
        <text>ATP + H2O = ADP + phosphate + H(+)</text>
        <dbReference type="Rhea" id="RHEA:13065"/>
        <dbReference type="ChEBI" id="CHEBI:15377"/>
        <dbReference type="ChEBI" id="CHEBI:15378"/>
        <dbReference type="ChEBI" id="CHEBI:30616"/>
        <dbReference type="ChEBI" id="CHEBI:43474"/>
        <dbReference type="ChEBI" id="CHEBI:456216"/>
        <dbReference type="EC" id="3.6.4.13"/>
    </reaction>
</comment>
<comment type="domain">
    <text>The Q motif is unique to and characteristic of the DEAD box family of RNA helicases and controls ATP binding and hydrolysis.</text>
</comment>
<comment type="similarity">
    <text evidence="4">Belongs to the DEAD box helicase family. DDX55/SPB4 subfamily.</text>
</comment>
<reference key="1">
    <citation type="journal article" date="2003" name="PLoS Biol.">
        <title>The genome sequence of Caenorhabditis briggsae: a platform for comparative genomics.</title>
        <authorList>
            <person name="Stein L.D."/>
            <person name="Bao Z."/>
            <person name="Blasiar D."/>
            <person name="Blumenthal T."/>
            <person name="Brent M.R."/>
            <person name="Chen N."/>
            <person name="Chinwalla A."/>
            <person name="Clarke L."/>
            <person name="Clee C."/>
            <person name="Coghlan A."/>
            <person name="Coulson A."/>
            <person name="D'Eustachio P."/>
            <person name="Fitch D.H.A."/>
            <person name="Fulton L.A."/>
            <person name="Fulton R.E."/>
            <person name="Griffiths-Jones S."/>
            <person name="Harris T.W."/>
            <person name="Hillier L.W."/>
            <person name="Kamath R."/>
            <person name="Kuwabara P.E."/>
            <person name="Mardis E.R."/>
            <person name="Marra M.A."/>
            <person name="Miner T.L."/>
            <person name="Minx P."/>
            <person name="Mullikin J.C."/>
            <person name="Plumb R.W."/>
            <person name="Rogers J."/>
            <person name="Schein J.E."/>
            <person name="Sohrmann M."/>
            <person name="Spieth J."/>
            <person name="Stajich J.E."/>
            <person name="Wei C."/>
            <person name="Willey D."/>
            <person name="Wilson R.K."/>
            <person name="Durbin R.M."/>
            <person name="Waterston R.H."/>
        </authorList>
    </citation>
    <scope>NUCLEOTIDE SEQUENCE [LARGE SCALE GENOMIC DNA]</scope>
    <source>
        <strain>AF16</strain>
    </source>
</reference>
<name>DDX55_CAEBR</name>
<organism>
    <name type="scientific">Caenorhabditis briggsae</name>
    <dbReference type="NCBI Taxonomy" id="6238"/>
    <lineage>
        <taxon>Eukaryota</taxon>
        <taxon>Metazoa</taxon>
        <taxon>Ecdysozoa</taxon>
        <taxon>Nematoda</taxon>
        <taxon>Chromadorea</taxon>
        <taxon>Rhabditida</taxon>
        <taxon>Rhabditina</taxon>
        <taxon>Rhabditomorpha</taxon>
        <taxon>Rhabditoidea</taxon>
        <taxon>Rhabditidae</taxon>
        <taxon>Peloderinae</taxon>
        <taxon>Caenorhabditis</taxon>
    </lineage>
</organism>
<proteinExistence type="inferred from homology"/>
<keyword id="KW-0067">ATP-binding</keyword>
<keyword id="KW-0347">Helicase</keyword>
<keyword id="KW-0378">Hydrolase</keyword>
<keyword id="KW-0547">Nucleotide-binding</keyword>
<keyword id="KW-1185">Reference proteome</keyword>
<keyword id="KW-0694">RNA-binding</keyword>
<evidence type="ECO:0000255" key="1">
    <source>
        <dbReference type="PROSITE-ProRule" id="PRU00541"/>
    </source>
</evidence>
<evidence type="ECO:0000255" key="2">
    <source>
        <dbReference type="PROSITE-ProRule" id="PRU00542"/>
    </source>
</evidence>
<evidence type="ECO:0000256" key="3">
    <source>
        <dbReference type="SAM" id="MobiDB-lite"/>
    </source>
</evidence>
<evidence type="ECO:0000305" key="4"/>
<protein>
    <recommendedName>
        <fullName>Probable ATP-dependent RNA helicase DDX55 homolog</fullName>
        <ecNumber>3.6.4.13</ecNumber>
    </recommendedName>
    <alternativeName>
        <fullName>DEAD box protein 55</fullName>
    </alternativeName>
</protein>
<gene>
    <name type="ORF">CBG06798</name>
</gene>